<keyword id="KW-0249">Electron transport</keyword>
<keyword id="KW-0349">Heme</keyword>
<keyword id="KW-0408">Iron</keyword>
<keyword id="KW-0472">Membrane</keyword>
<keyword id="KW-0479">Metal-binding</keyword>
<keyword id="KW-0496">Mitochondrion</keyword>
<keyword id="KW-0999">Mitochondrion inner membrane</keyword>
<keyword id="KW-0679">Respiratory chain</keyword>
<keyword id="KW-0812">Transmembrane</keyword>
<keyword id="KW-1133">Transmembrane helix</keyword>
<keyword id="KW-0813">Transport</keyword>
<keyword id="KW-0830">Ubiquinone</keyword>
<evidence type="ECO:0000250" key="1"/>
<evidence type="ECO:0000250" key="2">
    <source>
        <dbReference type="UniProtKB" id="P00157"/>
    </source>
</evidence>
<evidence type="ECO:0000255" key="3">
    <source>
        <dbReference type="PROSITE-ProRule" id="PRU00967"/>
    </source>
</evidence>
<evidence type="ECO:0000255" key="4">
    <source>
        <dbReference type="PROSITE-ProRule" id="PRU00968"/>
    </source>
</evidence>
<comment type="function">
    <text evidence="2">Component of the ubiquinol-cytochrome c reductase complex (complex III or cytochrome b-c1 complex) that is part of the mitochondrial respiratory chain. The b-c1 complex mediates electron transfer from ubiquinol to cytochrome c. Contributes to the generation of a proton gradient across the mitochondrial membrane that is then used for ATP synthesis.</text>
</comment>
<comment type="cofactor">
    <cofactor evidence="2">
        <name>heme b</name>
        <dbReference type="ChEBI" id="CHEBI:60344"/>
    </cofactor>
    <text evidence="2">Binds 2 heme b groups non-covalently.</text>
</comment>
<comment type="subunit">
    <text evidence="2">The cytochrome bc1 complex contains 11 subunits: 3 respiratory subunits (MT-CYB, CYC1 and UQCRFS1), 2 core proteins (UQCRC1 and UQCRC2) and 6 low-molecular weight proteins (UQCRH/QCR6, UQCRB/QCR7, UQCRQ/QCR8, UQCR10/QCR9, UQCR11/QCR10 and a cleavage product of UQCRFS1). This cytochrome bc1 complex then forms a dimer.</text>
</comment>
<comment type="subcellular location">
    <subcellularLocation>
        <location evidence="2">Mitochondrion inner membrane</location>
        <topology evidence="2">Multi-pass membrane protein</topology>
    </subcellularLocation>
</comment>
<comment type="miscellaneous">
    <text evidence="1">Heme 1 (or BL or b562) is low-potential and absorbs at about 562 nm, and heme 2 (or BH or b566) is high-potential and absorbs at about 566 nm.</text>
</comment>
<comment type="similarity">
    <text evidence="3 4">Belongs to the cytochrome b family.</text>
</comment>
<comment type="caution">
    <text evidence="2">The full-length protein contains only eight transmembrane helices, not nine as predicted by bioinformatics tools.</text>
</comment>
<gene>
    <name type="primary">MT-CYB</name>
    <name type="synonym">COB</name>
    <name type="synonym">CYTB</name>
    <name type="synonym">MTCYB</name>
</gene>
<reference key="1">
    <citation type="journal article" date="1999" name="Mar. Mamm. Sci.">
        <title>Phylogenetic relationships among the delphinid cetaceans based on full cytochrome b sequences.</title>
        <authorList>
            <person name="LeDuc R.G."/>
            <person name="Perrin W.F."/>
            <person name="Dizon A.E."/>
        </authorList>
    </citation>
    <scope>NUCLEOTIDE SEQUENCE [GENOMIC DNA]</scope>
</reference>
<organism>
    <name type="scientific">Lagenorhynchus australis</name>
    <name type="common">Peale's dolphin</name>
    <dbReference type="NCBI Taxonomy" id="103586"/>
    <lineage>
        <taxon>Eukaryota</taxon>
        <taxon>Metazoa</taxon>
        <taxon>Chordata</taxon>
        <taxon>Craniata</taxon>
        <taxon>Vertebrata</taxon>
        <taxon>Euteleostomi</taxon>
        <taxon>Mammalia</taxon>
        <taxon>Eutheria</taxon>
        <taxon>Laurasiatheria</taxon>
        <taxon>Artiodactyla</taxon>
        <taxon>Whippomorpha</taxon>
        <taxon>Cetacea</taxon>
        <taxon>Odontoceti</taxon>
        <taxon>Delphinidae</taxon>
        <taxon>Lagenorhynchus</taxon>
    </lineage>
</organism>
<accession>Q9TDL6</accession>
<geneLocation type="mitochondrion"/>
<feature type="chain" id="PRO_0000061079" description="Cytochrome b">
    <location>
        <begin position="1"/>
        <end position="379"/>
    </location>
</feature>
<feature type="transmembrane region" description="Helical" evidence="2">
    <location>
        <begin position="33"/>
        <end position="53"/>
    </location>
</feature>
<feature type="transmembrane region" description="Helical" evidence="2">
    <location>
        <begin position="77"/>
        <end position="98"/>
    </location>
</feature>
<feature type="transmembrane region" description="Helical" evidence="2">
    <location>
        <begin position="113"/>
        <end position="133"/>
    </location>
</feature>
<feature type="transmembrane region" description="Helical" evidence="2">
    <location>
        <begin position="178"/>
        <end position="198"/>
    </location>
</feature>
<feature type="transmembrane region" description="Helical" evidence="2">
    <location>
        <begin position="226"/>
        <end position="246"/>
    </location>
</feature>
<feature type="transmembrane region" description="Helical" evidence="2">
    <location>
        <begin position="288"/>
        <end position="308"/>
    </location>
</feature>
<feature type="transmembrane region" description="Helical" evidence="2">
    <location>
        <begin position="320"/>
        <end position="340"/>
    </location>
</feature>
<feature type="transmembrane region" description="Helical" evidence="2">
    <location>
        <begin position="347"/>
        <end position="367"/>
    </location>
</feature>
<feature type="binding site" description="axial binding residue" evidence="2">
    <location>
        <position position="83"/>
    </location>
    <ligand>
        <name>heme b</name>
        <dbReference type="ChEBI" id="CHEBI:60344"/>
        <label>b562</label>
    </ligand>
    <ligandPart>
        <name>Fe</name>
        <dbReference type="ChEBI" id="CHEBI:18248"/>
    </ligandPart>
</feature>
<feature type="binding site" description="axial binding residue" evidence="2">
    <location>
        <position position="97"/>
    </location>
    <ligand>
        <name>heme b</name>
        <dbReference type="ChEBI" id="CHEBI:60344"/>
        <label>b566</label>
    </ligand>
    <ligandPart>
        <name>Fe</name>
        <dbReference type="ChEBI" id="CHEBI:18248"/>
    </ligandPart>
</feature>
<feature type="binding site" description="axial binding residue" evidence="2">
    <location>
        <position position="182"/>
    </location>
    <ligand>
        <name>heme b</name>
        <dbReference type="ChEBI" id="CHEBI:60344"/>
        <label>b562</label>
    </ligand>
    <ligandPart>
        <name>Fe</name>
        <dbReference type="ChEBI" id="CHEBI:18248"/>
    </ligandPart>
</feature>
<feature type="binding site" description="axial binding residue" evidence="2">
    <location>
        <position position="196"/>
    </location>
    <ligand>
        <name>heme b</name>
        <dbReference type="ChEBI" id="CHEBI:60344"/>
        <label>b566</label>
    </ligand>
    <ligandPart>
        <name>Fe</name>
        <dbReference type="ChEBI" id="CHEBI:18248"/>
    </ligandPart>
</feature>
<feature type="binding site" evidence="2">
    <location>
        <position position="201"/>
    </location>
    <ligand>
        <name>a ubiquinone</name>
        <dbReference type="ChEBI" id="CHEBI:16389"/>
    </ligand>
</feature>
<sequence>MINIRKTHPLMKILNNAFIDLPTPSNISSWWNFGSLLGLCLIMQILTGLFLAMHYTPDTSTAFSSVAHICRDVNYGWFIRYLHANGASMFFICLYAHIGRGLYYGSYMFQETWNIGVLLLLTVMATAFVGYVLPWGQMSFWGATVITNLLSAIPYIGTTLVEWIWGGFSVDKATLTRFFAFHFILPFIITALAAVHLLFLHETGSNNPTGIPSNMDMIPFHPYYTTKDILGALFLILALLALTLFTPDLLGDPDNYTPANPLSTPAHIKPEWYFLFAYAILRSIPNKLGGVLALLLSILILIFIPMLQTSKQRSMMFRPFSQLLFWTLIADLLTLTWIGGQPVEHPYIIVGQLASILYFLLILVLMPTVSLIENKLLKW</sequence>
<protein>
    <recommendedName>
        <fullName>Cytochrome b</fullName>
    </recommendedName>
    <alternativeName>
        <fullName>Complex III subunit 3</fullName>
    </alternativeName>
    <alternativeName>
        <fullName>Complex III subunit III</fullName>
    </alternativeName>
    <alternativeName>
        <fullName>Cytochrome b-c1 complex subunit 3</fullName>
    </alternativeName>
    <alternativeName>
        <fullName>Ubiquinol-cytochrome-c reductase complex cytochrome b subunit</fullName>
    </alternativeName>
</protein>
<name>CYB_LAGAU</name>
<proteinExistence type="inferred from homology"/>
<dbReference type="EMBL" id="AF084069">
    <property type="protein sequence ID" value="AAD54446.1"/>
    <property type="molecule type" value="Genomic_DNA"/>
</dbReference>
<dbReference type="SMR" id="Q9TDL6"/>
<dbReference type="GO" id="GO:0005743">
    <property type="term" value="C:mitochondrial inner membrane"/>
    <property type="evidence" value="ECO:0007669"/>
    <property type="project" value="UniProtKB-SubCell"/>
</dbReference>
<dbReference type="GO" id="GO:0045275">
    <property type="term" value="C:respiratory chain complex III"/>
    <property type="evidence" value="ECO:0007669"/>
    <property type="project" value="InterPro"/>
</dbReference>
<dbReference type="GO" id="GO:0046872">
    <property type="term" value="F:metal ion binding"/>
    <property type="evidence" value="ECO:0007669"/>
    <property type="project" value="UniProtKB-KW"/>
</dbReference>
<dbReference type="GO" id="GO:0008121">
    <property type="term" value="F:ubiquinol-cytochrome-c reductase activity"/>
    <property type="evidence" value="ECO:0007669"/>
    <property type="project" value="InterPro"/>
</dbReference>
<dbReference type="GO" id="GO:0006122">
    <property type="term" value="P:mitochondrial electron transport, ubiquinol to cytochrome c"/>
    <property type="evidence" value="ECO:0007669"/>
    <property type="project" value="TreeGrafter"/>
</dbReference>
<dbReference type="CDD" id="cd00290">
    <property type="entry name" value="cytochrome_b_C"/>
    <property type="match status" value="1"/>
</dbReference>
<dbReference type="CDD" id="cd00284">
    <property type="entry name" value="Cytochrome_b_N"/>
    <property type="match status" value="1"/>
</dbReference>
<dbReference type="FunFam" id="1.20.810.10:FF:000002">
    <property type="entry name" value="Cytochrome b"/>
    <property type="match status" value="1"/>
</dbReference>
<dbReference type="Gene3D" id="1.20.810.10">
    <property type="entry name" value="Cytochrome Bc1 Complex, Chain C"/>
    <property type="match status" value="1"/>
</dbReference>
<dbReference type="InterPro" id="IPR005798">
    <property type="entry name" value="Cyt_b/b6_C"/>
</dbReference>
<dbReference type="InterPro" id="IPR036150">
    <property type="entry name" value="Cyt_b/b6_C_sf"/>
</dbReference>
<dbReference type="InterPro" id="IPR005797">
    <property type="entry name" value="Cyt_b/b6_N"/>
</dbReference>
<dbReference type="InterPro" id="IPR027387">
    <property type="entry name" value="Cytb/b6-like_sf"/>
</dbReference>
<dbReference type="InterPro" id="IPR030689">
    <property type="entry name" value="Cytochrome_b"/>
</dbReference>
<dbReference type="InterPro" id="IPR048260">
    <property type="entry name" value="Cytochrome_b_C_euk/bac"/>
</dbReference>
<dbReference type="InterPro" id="IPR048259">
    <property type="entry name" value="Cytochrome_b_N_euk/bac"/>
</dbReference>
<dbReference type="InterPro" id="IPR016174">
    <property type="entry name" value="Di-haem_cyt_TM"/>
</dbReference>
<dbReference type="PANTHER" id="PTHR19271">
    <property type="entry name" value="CYTOCHROME B"/>
    <property type="match status" value="1"/>
</dbReference>
<dbReference type="PANTHER" id="PTHR19271:SF16">
    <property type="entry name" value="CYTOCHROME B"/>
    <property type="match status" value="1"/>
</dbReference>
<dbReference type="Pfam" id="PF00032">
    <property type="entry name" value="Cytochrom_B_C"/>
    <property type="match status" value="1"/>
</dbReference>
<dbReference type="Pfam" id="PF00033">
    <property type="entry name" value="Cytochrome_B"/>
    <property type="match status" value="1"/>
</dbReference>
<dbReference type="PIRSF" id="PIRSF038885">
    <property type="entry name" value="COB"/>
    <property type="match status" value="1"/>
</dbReference>
<dbReference type="SUPFAM" id="SSF81648">
    <property type="entry name" value="a domain/subunit of cytochrome bc1 complex (Ubiquinol-cytochrome c reductase)"/>
    <property type="match status" value="1"/>
</dbReference>
<dbReference type="SUPFAM" id="SSF81342">
    <property type="entry name" value="Transmembrane di-heme cytochromes"/>
    <property type="match status" value="1"/>
</dbReference>
<dbReference type="PROSITE" id="PS51003">
    <property type="entry name" value="CYTB_CTER"/>
    <property type="match status" value="1"/>
</dbReference>
<dbReference type="PROSITE" id="PS51002">
    <property type="entry name" value="CYTB_NTER"/>
    <property type="match status" value="1"/>
</dbReference>